<accession>B7HDV9</accession>
<name>SUCC_BACC4</name>
<gene>
    <name evidence="1" type="primary">sucC</name>
    <name type="ordered locus">BCB4264_A3934</name>
</gene>
<dbReference type="EC" id="6.2.1.5" evidence="1"/>
<dbReference type="EMBL" id="CP001176">
    <property type="protein sequence ID" value="ACK62537.1"/>
    <property type="molecule type" value="Genomic_DNA"/>
</dbReference>
<dbReference type="RefSeq" id="WP_001020791.1">
    <property type="nucleotide sequence ID" value="NZ_VEHB01000002.1"/>
</dbReference>
<dbReference type="SMR" id="B7HDV9"/>
<dbReference type="KEGG" id="bcb:BCB4264_A3934"/>
<dbReference type="HOGENOM" id="CLU_037430_0_2_9"/>
<dbReference type="UniPathway" id="UPA00223">
    <property type="reaction ID" value="UER00999"/>
</dbReference>
<dbReference type="Proteomes" id="UP000007096">
    <property type="component" value="Chromosome"/>
</dbReference>
<dbReference type="GO" id="GO:0005829">
    <property type="term" value="C:cytosol"/>
    <property type="evidence" value="ECO:0007669"/>
    <property type="project" value="TreeGrafter"/>
</dbReference>
<dbReference type="GO" id="GO:0042709">
    <property type="term" value="C:succinate-CoA ligase complex"/>
    <property type="evidence" value="ECO:0007669"/>
    <property type="project" value="TreeGrafter"/>
</dbReference>
<dbReference type="GO" id="GO:0005524">
    <property type="term" value="F:ATP binding"/>
    <property type="evidence" value="ECO:0007669"/>
    <property type="project" value="UniProtKB-UniRule"/>
</dbReference>
<dbReference type="GO" id="GO:0000287">
    <property type="term" value="F:magnesium ion binding"/>
    <property type="evidence" value="ECO:0007669"/>
    <property type="project" value="UniProtKB-UniRule"/>
</dbReference>
<dbReference type="GO" id="GO:0004775">
    <property type="term" value="F:succinate-CoA ligase (ADP-forming) activity"/>
    <property type="evidence" value="ECO:0007669"/>
    <property type="project" value="UniProtKB-UniRule"/>
</dbReference>
<dbReference type="GO" id="GO:0004776">
    <property type="term" value="F:succinate-CoA ligase (GDP-forming) activity"/>
    <property type="evidence" value="ECO:0007669"/>
    <property type="project" value="RHEA"/>
</dbReference>
<dbReference type="GO" id="GO:0006104">
    <property type="term" value="P:succinyl-CoA metabolic process"/>
    <property type="evidence" value="ECO:0007669"/>
    <property type="project" value="TreeGrafter"/>
</dbReference>
<dbReference type="GO" id="GO:0006099">
    <property type="term" value="P:tricarboxylic acid cycle"/>
    <property type="evidence" value="ECO:0007669"/>
    <property type="project" value="UniProtKB-UniRule"/>
</dbReference>
<dbReference type="FunFam" id="3.30.1490.20:FF:000002">
    <property type="entry name" value="Succinate--CoA ligase [ADP-forming] subunit beta"/>
    <property type="match status" value="1"/>
</dbReference>
<dbReference type="FunFam" id="3.30.470.20:FF:000002">
    <property type="entry name" value="Succinate--CoA ligase [ADP-forming] subunit beta"/>
    <property type="match status" value="1"/>
</dbReference>
<dbReference type="FunFam" id="3.40.50.261:FF:000001">
    <property type="entry name" value="Succinate--CoA ligase [ADP-forming] subunit beta"/>
    <property type="match status" value="1"/>
</dbReference>
<dbReference type="Gene3D" id="3.30.1490.20">
    <property type="entry name" value="ATP-grasp fold, A domain"/>
    <property type="match status" value="1"/>
</dbReference>
<dbReference type="Gene3D" id="3.30.470.20">
    <property type="entry name" value="ATP-grasp fold, B domain"/>
    <property type="match status" value="1"/>
</dbReference>
<dbReference type="Gene3D" id="3.40.50.261">
    <property type="entry name" value="Succinyl-CoA synthetase domains"/>
    <property type="match status" value="1"/>
</dbReference>
<dbReference type="HAMAP" id="MF_00558">
    <property type="entry name" value="Succ_CoA_beta"/>
    <property type="match status" value="1"/>
</dbReference>
<dbReference type="InterPro" id="IPR011761">
    <property type="entry name" value="ATP-grasp"/>
</dbReference>
<dbReference type="InterPro" id="IPR013650">
    <property type="entry name" value="ATP-grasp_succ-CoA_synth-type"/>
</dbReference>
<dbReference type="InterPro" id="IPR013815">
    <property type="entry name" value="ATP_grasp_subdomain_1"/>
</dbReference>
<dbReference type="InterPro" id="IPR005811">
    <property type="entry name" value="SUCC_ACL_C"/>
</dbReference>
<dbReference type="InterPro" id="IPR005809">
    <property type="entry name" value="Succ_CoA_ligase-like_bsu"/>
</dbReference>
<dbReference type="InterPro" id="IPR016102">
    <property type="entry name" value="Succinyl-CoA_synth-like"/>
</dbReference>
<dbReference type="NCBIfam" id="NF001913">
    <property type="entry name" value="PRK00696.1"/>
    <property type="match status" value="1"/>
</dbReference>
<dbReference type="NCBIfam" id="TIGR01016">
    <property type="entry name" value="sucCoAbeta"/>
    <property type="match status" value="1"/>
</dbReference>
<dbReference type="PANTHER" id="PTHR11815:SF10">
    <property type="entry name" value="SUCCINATE--COA LIGASE [GDP-FORMING] SUBUNIT BETA, MITOCHONDRIAL"/>
    <property type="match status" value="1"/>
</dbReference>
<dbReference type="PANTHER" id="PTHR11815">
    <property type="entry name" value="SUCCINYL-COA SYNTHETASE BETA CHAIN"/>
    <property type="match status" value="1"/>
</dbReference>
<dbReference type="Pfam" id="PF08442">
    <property type="entry name" value="ATP-grasp_2"/>
    <property type="match status" value="1"/>
</dbReference>
<dbReference type="Pfam" id="PF00549">
    <property type="entry name" value="Ligase_CoA"/>
    <property type="match status" value="1"/>
</dbReference>
<dbReference type="PIRSF" id="PIRSF001554">
    <property type="entry name" value="SucCS_beta"/>
    <property type="match status" value="1"/>
</dbReference>
<dbReference type="SUPFAM" id="SSF56059">
    <property type="entry name" value="Glutathione synthetase ATP-binding domain-like"/>
    <property type="match status" value="1"/>
</dbReference>
<dbReference type="SUPFAM" id="SSF52210">
    <property type="entry name" value="Succinyl-CoA synthetase domains"/>
    <property type="match status" value="1"/>
</dbReference>
<dbReference type="PROSITE" id="PS50975">
    <property type="entry name" value="ATP_GRASP"/>
    <property type="match status" value="1"/>
</dbReference>
<protein>
    <recommendedName>
        <fullName evidence="1">Succinate--CoA ligase [ADP-forming] subunit beta</fullName>
        <ecNumber evidence="1">6.2.1.5</ecNumber>
    </recommendedName>
    <alternativeName>
        <fullName evidence="1">Succinyl-CoA synthetase subunit beta</fullName>
        <shortName evidence="1">SCS-beta</shortName>
    </alternativeName>
</protein>
<reference key="1">
    <citation type="submission" date="2008-10" db="EMBL/GenBank/DDBJ databases">
        <title>Genome sequence of Bacillus cereus B4264.</title>
        <authorList>
            <person name="Dodson R.J."/>
            <person name="Durkin A.S."/>
            <person name="Rosovitz M.J."/>
            <person name="Rasko D.A."/>
            <person name="Hoffmaster A."/>
            <person name="Ravel J."/>
            <person name="Sutton G."/>
        </authorList>
    </citation>
    <scope>NUCLEOTIDE SEQUENCE [LARGE SCALE GENOMIC DNA]</scope>
    <source>
        <strain>B4264</strain>
    </source>
</reference>
<organism>
    <name type="scientific">Bacillus cereus (strain B4264)</name>
    <dbReference type="NCBI Taxonomy" id="405532"/>
    <lineage>
        <taxon>Bacteria</taxon>
        <taxon>Bacillati</taxon>
        <taxon>Bacillota</taxon>
        <taxon>Bacilli</taxon>
        <taxon>Bacillales</taxon>
        <taxon>Bacillaceae</taxon>
        <taxon>Bacillus</taxon>
        <taxon>Bacillus cereus group</taxon>
    </lineage>
</organism>
<comment type="function">
    <text evidence="1">Succinyl-CoA synthetase functions in the citric acid cycle (TCA), coupling the hydrolysis of succinyl-CoA to the synthesis of either ATP or GTP and thus represents the only step of substrate-level phosphorylation in the TCA. The beta subunit provides nucleotide specificity of the enzyme and binds the substrate succinate, while the binding sites for coenzyme A and phosphate are found in the alpha subunit.</text>
</comment>
<comment type="catalytic activity">
    <reaction evidence="1">
        <text>succinate + ATP + CoA = succinyl-CoA + ADP + phosphate</text>
        <dbReference type="Rhea" id="RHEA:17661"/>
        <dbReference type="ChEBI" id="CHEBI:30031"/>
        <dbReference type="ChEBI" id="CHEBI:30616"/>
        <dbReference type="ChEBI" id="CHEBI:43474"/>
        <dbReference type="ChEBI" id="CHEBI:57287"/>
        <dbReference type="ChEBI" id="CHEBI:57292"/>
        <dbReference type="ChEBI" id="CHEBI:456216"/>
        <dbReference type="EC" id="6.2.1.5"/>
    </reaction>
    <physiologicalReaction direction="right-to-left" evidence="1">
        <dbReference type="Rhea" id="RHEA:17663"/>
    </physiologicalReaction>
</comment>
<comment type="catalytic activity">
    <reaction evidence="1">
        <text>GTP + succinate + CoA = succinyl-CoA + GDP + phosphate</text>
        <dbReference type="Rhea" id="RHEA:22120"/>
        <dbReference type="ChEBI" id="CHEBI:30031"/>
        <dbReference type="ChEBI" id="CHEBI:37565"/>
        <dbReference type="ChEBI" id="CHEBI:43474"/>
        <dbReference type="ChEBI" id="CHEBI:57287"/>
        <dbReference type="ChEBI" id="CHEBI:57292"/>
        <dbReference type="ChEBI" id="CHEBI:58189"/>
    </reaction>
    <physiologicalReaction direction="right-to-left" evidence="1">
        <dbReference type="Rhea" id="RHEA:22122"/>
    </physiologicalReaction>
</comment>
<comment type="cofactor">
    <cofactor evidence="1">
        <name>Mg(2+)</name>
        <dbReference type="ChEBI" id="CHEBI:18420"/>
    </cofactor>
    <text evidence="1">Binds 1 Mg(2+) ion per subunit.</text>
</comment>
<comment type="pathway">
    <text evidence="1">Carbohydrate metabolism; tricarboxylic acid cycle; succinate from succinyl-CoA (ligase route): step 1/1.</text>
</comment>
<comment type="subunit">
    <text evidence="1">Heterotetramer of two alpha and two beta subunits.</text>
</comment>
<comment type="similarity">
    <text evidence="1">Belongs to the succinate/malate CoA ligase beta subunit family.</text>
</comment>
<sequence>MNIHEYQGKAVLRSYGVSVPNGKVAFTVEEAVEAAKELGTDVCVVKAQIHAGGRGKAGGVKVAKNLDEVRTYAESILGTTLVTHQTGPEGKEVKRLLIEEGCDIKKEYYVGLVLDRATSQVVLMASEEGGTEIEEVAEKTPEKIFKEYIDPAVGLQGFQARRIAFNINIPKELVGQAVKFMMGLYRAFIEKDCSIAEINPLVTTGEGKVMALDAKLNFDSNALYRHKDILELRDLDEEDSKEIEASKYDLNYIPLDGNIGCMVNGAGLAMATMDIIKHYHGDPANFLDVGGGATAEKVTEAFKIILSDKNVKGIFVNIFGGIMKCDVIAEGVIEATKQVGLELPLVVRLEGTNVELGKKILNESGLNIVAAESMADGAQKIVSLVG</sequence>
<keyword id="KW-0067">ATP-binding</keyword>
<keyword id="KW-0436">Ligase</keyword>
<keyword id="KW-0460">Magnesium</keyword>
<keyword id="KW-0479">Metal-binding</keyword>
<keyword id="KW-0547">Nucleotide-binding</keyword>
<keyword id="KW-0816">Tricarboxylic acid cycle</keyword>
<evidence type="ECO:0000255" key="1">
    <source>
        <dbReference type="HAMAP-Rule" id="MF_00558"/>
    </source>
</evidence>
<feature type="chain" id="PRO_1000129160" description="Succinate--CoA ligase [ADP-forming] subunit beta">
    <location>
        <begin position="1"/>
        <end position="386"/>
    </location>
</feature>
<feature type="domain" description="ATP-grasp" evidence="1">
    <location>
        <begin position="9"/>
        <end position="244"/>
    </location>
</feature>
<feature type="binding site" evidence="1">
    <location>
        <position position="46"/>
    </location>
    <ligand>
        <name>ATP</name>
        <dbReference type="ChEBI" id="CHEBI:30616"/>
    </ligand>
</feature>
<feature type="binding site" evidence="1">
    <location>
        <begin position="53"/>
        <end position="55"/>
    </location>
    <ligand>
        <name>ATP</name>
        <dbReference type="ChEBI" id="CHEBI:30616"/>
    </ligand>
</feature>
<feature type="binding site" evidence="1">
    <location>
        <position position="99"/>
    </location>
    <ligand>
        <name>ATP</name>
        <dbReference type="ChEBI" id="CHEBI:30616"/>
    </ligand>
</feature>
<feature type="binding site" evidence="1">
    <location>
        <position position="102"/>
    </location>
    <ligand>
        <name>ATP</name>
        <dbReference type="ChEBI" id="CHEBI:30616"/>
    </ligand>
</feature>
<feature type="binding site" evidence="1">
    <location>
        <position position="107"/>
    </location>
    <ligand>
        <name>ATP</name>
        <dbReference type="ChEBI" id="CHEBI:30616"/>
    </ligand>
</feature>
<feature type="binding site" evidence="1">
    <location>
        <position position="199"/>
    </location>
    <ligand>
        <name>Mg(2+)</name>
        <dbReference type="ChEBI" id="CHEBI:18420"/>
    </ligand>
</feature>
<feature type="binding site" evidence="1">
    <location>
        <position position="213"/>
    </location>
    <ligand>
        <name>Mg(2+)</name>
        <dbReference type="ChEBI" id="CHEBI:18420"/>
    </ligand>
</feature>
<feature type="binding site" evidence="1">
    <location>
        <position position="264"/>
    </location>
    <ligand>
        <name>substrate</name>
        <note>ligand shared with subunit alpha</note>
    </ligand>
</feature>
<feature type="binding site" evidence="1">
    <location>
        <begin position="321"/>
        <end position="323"/>
    </location>
    <ligand>
        <name>substrate</name>
        <note>ligand shared with subunit alpha</note>
    </ligand>
</feature>
<proteinExistence type="inferred from homology"/>